<accession>Q9Y247</accession>
<accession>Q5T2L6</accession>
<proteinExistence type="evidence at protein level"/>
<comment type="interaction">
    <interactant intactId="EBI-742802">
        <id>Q9Y247</id>
    </interactant>
    <interactant intactId="EBI-77797">
        <id>P35609</id>
        <label>ACTN2</label>
    </interactant>
    <organismsDiffer>false</organismsDiffer>
    <experiments>3</experiments>
</comment>
<comment type="interaction">
    <interactant intactId="EBI-742802">
        <id>Q9Y247</id>
    </interactant>
    <interactant intactId="EBI-11975051">
        <id>Q8TD16-2</id>
        <label>BICD2</label>
    </interactant>
    <organismsDiffer>false</organismsDiffer>
    <experiments>3</experiments>
</comment>
<comment type="interaction">
    <interactant intactId="EBI-742802">
        <id>Q9Y247</id>
    </interactant>
    <interactant intactId="EBI-751319">
        <id>Q9H257</id>
        <label>CARD9</label>
    </interactant>
    <organismsDiffer>false</organismsDiffer>
    <experiments>3</experiments>
</comment>
<comment type="interaction">
    <interactant intactId="EBI-742802">
        <id>Q9Y247</id>
    </interactant>
    <interactant intactId="EBI-2808286">
        <id>Q2TAC2</id>
        <label>CCDC57</label>
    </interactant>
    <organismsDiffer>false</organismsDiffer>
    <experiments>3</experiments>
</comment>
<comment type="interaction">
    <interactant intactId="EBI-742802">
        <id>Q9Y247</id>
    </interactant>
    <interactant intactId="EBI-12814117">
        <id>Q8N998</id>
        <label>CCDC89</label>
    </interactant>
    <organismsDiffer>false</organismsDiffer>
    <experiments>3</experiments>
</comment>
<comment type="interaction">
    <interactant intactId="EBI-742802">
        <id>Q9Y247</id>
    </interactant>
    <interactant intactId="EBI-395261">
        <id>P24863</id>
        <label>CCNC</label>
    </interactant>
    <organismsDiffer>false</organismsDiffer>
    <experiments>3</experiments>
</comment>
<comment type="interaction">
    <interactant intactId="EBI-742802">
        <id>Q9Y247</id>
    </interactant>
    <interactant intactId="EBI-1181367">
        <id>Q01850</id>
        <label>CDR2</label>
    </interactant>
    <organismsDiffer>false</organismsDiffer>
    <experiments>3</experiments>
</comment>
<comment type="interaction">
    <interactant intactId="EBI-742802">
        <id>Q9Y247</id>
    </interactant>
    <interactant intactId="EBI-748597">
        <id>Q05D60</id>
        <label>DEUP1</label>
    </interactant>
    <organismsDiffer>false</organismsDiffer>
    <experiments>3</experiments>
</comment>
<comment type="interaction">
    <interactant intactId="EBI-742802">
        <id>Q9Y247</id>
    </interactant>
    <interactant intactId="EBI-5661036">
        <id>A1L4K1</id>
        <label>FSD2</label>
    </interactant>
    <organismsDiffer>false</organismsDiffer>
    <experiments>3</experiments>
</comment>
<comment type="interaction">
    <interactant intactId="EBI-742802">
        <id>Q9Y247</id>
    </interactant>
    <interactant intactId="EBI-744302">
        <id>P14136</id>
        <label>GFAP</label>
    </interactant>
    <organismsDiffer>false</organismsDiffer>
    <experiments>3</experiments>
</comment>
<comment type="interaction">
    <interactant intactId="EBI-742802">
        <id>Q9Y247</id>
    </interactant>
    <interactant intactId="EBI-2548508">
        <id>Q96IK5</id>
        <label>GMCL1</label>
    </interactant>
    <organismsDiffer>false</organismsDiffer>
    <experiments>3</experiments>
</comment>
<comment type="interaction">
    <interactant intactId="EBI-742802">
        <id>Q9Y247</id>
    </interactant>
    <interactant intactId="EBI-618309">
        <id>Q08379</id>
        <label>GOLGA2</label>
    </interactant>
    <organismsDiffer>false</organismsDiffer>
    <experiments>6</experiments>
</comment>
<comment type="interaction">
    <interactant intactId="EBI-742802">
        <id>Q9Y247</id>
    </interactant>
    <interactant intactId="EBI-717919">
        <id>Q4V328</id>
        <label>GRIPAP1</label>
    </interactant>
    <organismsDiffer>false</organismsDiffer>
    <experiments>3</experiments>
</comment>
<comment type="interaction">
    <interactant intactId="EBI-742802">
        <id>Q9Y247</id>
    </interactant>
    <interactant intactId="EBI-712814">
        <id>P54257</id>
        <label>HAP1</label>
    </interactant>
    <organismsDiffer>false</organismsDiffer>
    <experiments>3</experiments>
</comment>
<comment type="interaction">
    <interactant intactId="EBI-742802">
        <id>Q9Y247</id>
    </interactant>
    <interactant intactId="EBI-10961706">
        <id>Q96ED9-2</id>
        <label>HOOK2</label>
    </interactant>
    <organismsDiffer>false</organismsDiffer>
    <experiments>3</experiments>
</comment>
<comment type="interaction">
    <interactant intactId="EBI-742802">
        <id>Q9Y247</id>
    </interactant>
    <interactant intactId="EBI-745305">
        <id>Q13422</id>
        <label>IKZF1</label>
    </interactant>
    <organismsDiffer>false</organismsDiffer>
    <experiments>4</experiments>
</comment>
<comment type="interaction">
    <interactant intactId="EBI-742802">
        <id>Q9Y247</id>
    </interactant>
    <interactant intactId="EBI-747204">
        <id>Q9UKT9</id>
        <label>IKZF3</label>
    </interactant>
    <organismsDiffer>false</organismsDiffer>
    <experiments>3</experiments>
</comment>
<comment type="interaction">
    <interactant intactId="EBI-742802">
        <id>Q9Y247</id>
    </interactant>
    <interactant intactId="EBI-749265">
        <id>Q8N6L0</id>
        <label>KASH5</label>
    </interactant>
    <organismsDiffer>false</organismsDiffer>
    <experiments>3</experiments>
</comment>
<comment type="interaction">
    <interactant intactId="EBI-742802">
        <id>Q9Y247</id>
    </interactant>
    <interactant intactId="EBI-396343">
        <id>O00629</id>
        <label>KPNA4</label>
    </interactant>
    <organismsDiffer>false</organismsDiffer>
    <experiments>3</experiments>
</comment>
<comment type="interaction">
    <interactant intactId="EBI-742802">
        <id>Q9Y247</id>
    </interactant>
    <interactant intactId="EBI-948001">
        <id>Q15323</id>
        <label>KRT31</label>
    </interactant>
    <organismsDiffer>false</organismsDiffer>
    <experiments>3</experiments>
</comment>
<comment type="interaction">
    <interactant intactId="EBI-742802">
        <id>Q9Y247</id>
    </interactant>
    <interactant intactId="EBI-1047093">
        <id>O76011</id>
        <label>KRT34</label>
    </interactant>
    <organismsDiffer>false</organismsDiffer>
    <experiments>3</experiments>
</comment>
<comment type="interaction">
    <interactant intactId="EBI-742802">
        <id>Q9Y247</id>
    </interactant>
    <interactant intactId="EBI-740738">
        <id>O95751</id>
        <label>LDOC1</label>
    </interactant>
    <organismsDiffer>false</organismsDiffer>
    <experiments>6</experiments>
</comment>
<comment type="interaction">
    <interactant intactId="EBI-742802">
        <id>Q9Y247</id>
    </interactant>
    <interactant intactId="EBI-1216080">
        <id>Q9Y250</id>
        <label>LZTS1</label>
    </interactant>
    <organismsDiffer>false</organismsDiffer>
    <experiments>3</experiments>
</comment>
<comment type="interaction">
    <interactant intactId="EBI-742802">
        <id>Q9Y247</id>
    </interactant>
    <interactant intactId="EBI-741037">
        <id>Q9BRK4</id>
        <label>LZTS2</label>
    </interactant>
    <organismsDiffer>false</organismsDiffer>
    <experiments>3</experiments>
</comment>
<comment type="interaction">
    <interactant intactId="EBI-742802">
        <id>Q9Y247</id>
    </interactant>
    <interactant intactId="EBI-2340316">
        <id>O15344</id>
        <label>MID1</label>
    </interactant>
    <organismsDiffer>false</organismsDiffer>
    <experiments>3</experiments>
</comment>
<comment type="interaction">
    <interactant intactId="EBI-742802">
        <id>Q9Y247</id>
    </interactant>
    <interactant intactId="EBI-10172526">
        <id>Q9UJV3-2</id>
        <label>MID2</label>
    </interactant>
    <organismsDiffer>false</organismsDiffer>
    <experiments>3</experiments>
</comment>
<comment type="interaction">
    <interactant intactId="EBI-742802">
        <id>Q9Y247</id>
    </interactant>
    <interactant intactId="EBI-744248">
        <id>P40692</id>
        <label>MLH1</label>
    </interactant>
    <organismsDiffer>false</organismsDiffer>
    <experiments>3</experiments>
</comment>
<comment type="interaction">
    <interactant intactId="EBI-742802">
        <id>Q9Y247</id>
    </interactant>
    <interactant intactId="EBI-591778">
        <id>P61970</id>
        <label>NUTF2</label>
    </interactant>
    <organismsDiffer>false</organismsDiffer>
    <experiments>3</experiments>
</comment>
<comment type="interaction">
    <interactant intactId="EBI-742802">
        <id>Q9Y247</id>
    </interactant>
    <interactant intactId="EBI-747278">
        <id>P26367</id>
        <label>PAX6</label>
    </interactant>
    <organismsDiffer>false</organismsDiffer>
    <experiments>3</experiments>
</comment>
<comment type="interaction">
    <interactant intactId="EBI-742802">
        <id>Q9Y247</id>
    </interactant>
    <interactant intactId="EBI-9640281">
        <id>Q5VU43-2</id>
        <label>PDE4DIP</label>
    </interactant>
    <organismsDiffer>false</organismsDiffer>
    <experiments>3</experiments>
</comment>
<comment type="interaction">
    <interactant intactId="EBI-742802">
        <id>Q9Y247</id>
    </interactant>
    <interactant intactId="EBI-14066006">
        <id>Q4G0R1</id>
        <label>PIBF1</label>
    </interactant>
    <organismsDiffer>false</organismsDiffer>
    <experiments>3</experiments>
</comment>
<comment type="interaction">
    <interactant intactId="EBI-742802">
        <id>Q9Y247</id>
    </interactant>
    <interactant intactId="EBI-372273">
        <id>P20618</id>
        <label>PSMB1</label>
    </interactant>
    <organismsDiffer>false</organismsDiffer>
    <experiments>3</experiments>
</comment>
<comment type="interaction">
    <interactant intactId="EBI-742802">
        <id>Q9Y247</id>
    </interactant>
    <interactant intactId="EBI-447043">
        <id>Q15276</id>
        <label>RABEP1</label>
    </interactant>
    <organismsDiffer>false</organismsDiffer>
    <experiments>3</experiments>
</comment>
<comment type="interaction">
    <interactant intactId="EBI-742802">
        <id>Q9Y247</id>
    </interactant>
    <interactant intactId="EBI-12007872">
        <id>O75410-7</id>
        <label>TACC1</label>
    </interactant>
    <organismsDiffer>false</organismsDiffer>
    <experiments>3</experiments>
</comment>
<comment type="interaction">
    <interactant intactId="EBI-742802">
        <id>Q9Y247</id>
    </interactant>
    <interactant intactId="EBI-1644036">
        <id>Q86TI0</id>
        <label>TBC1D1</label>
    </interactant>
    <organismsDiffer>false</organismsDiffer>
    <experiments>3</experiments>
</comment>
<comment type="interaction">
    <interactant intactId="EBI-742802">
        <id>Q9Y247</id>
    </interactant>
    <interactant intactId="EBI-11952764">
        <id>Q99081-3</id>
        <label>TCF12</label>
    </interactant>
    <organismsDiffer>false</organismsDiffer>
    <experiments>3</experiments>
</comment>
<comment type="interaction">
    <interactant intactId="EBI-742802">
        <id>Q9Y247</id>
    </interactant>
    <interactant intactId="EBI-1105213">
        <id>Q9UBB9</id>
        <label>TFIP11</label>
    </interactant>
    <organismsDiffer>false</organismsDiffer>
    <experiments>3</experiments>
</comment>
<comment type="interaction">
    <interactant intactId="EBI-742802">
        <id>Q9Y247</id>
    </interactant>
    <interactant intactId="EBI-355744">
        <id>Q12933</id>
        <label>TRAF2</label>
    </interactant>
    <organismsDiffer>false</organismsDiffer>
    <experiments>3</experiments>
</comment>
<comment type="interaction">
    <interactant intactId="EBI-742802">
        <id>Q9Y247</id>
    </interactant>
    <interactant intactId="EBI-2820256">
        <id>Q14142</id>
        <label>TRIM14</label>
    </interactant>
    <organismsDiffer>false</organismsDiffer>
    <experiments>3</experiments>
</comment>
<comment type="interaction">
    <interactant intactId="EBI-742802">
        <id>Q9Y247</id>
    </interactant>
    <interactant intactId="EBI-741602">
        <id>O94972</id>
        <label>TRIM37</label>
    </interactant>
    <organismsDiffer>false</organismsDiffer>
    <experiments>3</experiments>
</comment>
<comment type="interaction">
    <interactant intactId="EBI-742802">
        <id>Q9Y247</id>
    </interactant>
    <interactant intactId="EBI-2130429">
        <id>Q9BYV2</id>
        <label>TRIM54</label>
    </interactant>
    <organismsDiffer>false</organismsDiffer>
    <experiments>3</experiments>
</comment>
<comment type="interaction">
    <interactant intactId="EBI-742802">
        <id>Q9Y247</id>
    </interactant>
    <interactant intactId="EBI-607755">
        <id>Q9BZL1</id>
        <label>UBL5</label>
    </interactant>
    <organismsDiffer>false</organismsDiffer>
    <experiments>3</experiments>
</comment>
<comment type="interaction">
    <interactant intactId="EBI-742802">
        <id>Q9Y247</id>
    </interactant>
    <interactant intactId="EBI-2107455">
        <id>Q08AM6</id>
        <label>VAC14</label>
    </interactant>
    <organismsDiffer>false</organismsDiffer>
    <experiments>3</experiments>
</comment>
<comment type="interaction">
    <interactant intactId="EBI-742802">
        <id>Q9Y247</id>
    </interactant>
    <interactant intactId="EBI-2799833">
        <id>Q8N1B4</id>
        <label>VPS52</label>
    </interactant>
    <organismsDiffer>false</organismsDiffer>
    <experiments>3</experiments>
</comment>
<comment type="interaction">
    <interactant intactId="EBI-742802">
        <id>Q9Y247</id>
    </interactant>
    <interactant intactId="EBI-12030590">
        <id>Q9H0C1</id>
        <label>ZMYND12</label>
    </interactant>
    <organismsDiffer>false</organismsDiffer>
    <experiments>3</experiments>
</comment>
<comment type="interaction">
    <interactant intactId="EBI-742802">
        <id>Q9Y247</id>
    </interactant>
    <interactant intactId="EBI-527853">
        <id>Q9UGI0</id>
        <label>ZRANB1</label>
    </interactant>
    <organismsDiffer>false</organismsDiffer>
    <experiments>3</experiments>
</comment>
<comment type="tissue specificity">
    <text>Widely expressed. Mostly abundant in testis and adult and fetal brain.</text>
</comment>
<comment type="induction">
    <text evidence="2">Imprinted. Promoter methylation of the maternal allele may restrict expression to the paternal allele in placenta.</text>
</comment>
<comment type="similarity">
    <text evidence="3">Belongs to the FAM50 family.</text>
</comment>
<organism>
    <name type="scientific">Homo sapiens</name>
    <name type="common">Human</name>
    <dbReference type="NCBI Taxonomy" id="9606"/>
    <lineage>
        <taxon>Eukaryota</taxon>
        <taxon>Metazoa</taxon>
        <taxon>Chordata</taxon>
        <taxon>Craniata</taxon>
        <taxon>Vertebrata</taxon>
        <taxon>Euteleostomi</taxon>
        <taxon>Mammalia</taxon>
        <taxon>Eutheria</taxon>
        <taxon>Euarchontoglires</taxon>
        <taxon>Primates</taxon>
        <taxon>Haplorrhini</taxon>
        <taxon>Catarrhini</taxon>
        <taxon>Hominidae</taxon>
        <taxon>Homo</taxon>
    </lineage>
</organism>
<name>FA50B_HUMAN</name>
<feature type="initiator methionine" description="Removed" evidence="4">
    <location>
        <position position="1"/>
    </location>
</feature>
<feature type="chain" id="PRO_0000068286" description="Protein FAM50B">
    <location>
        <begin position="2"/>
        <end position="325"/>
    </location>
</feature>
<feature type="region of interest" description="Disordered" evidence="1">
    <location>
        <begin position="92"/>
        <end position="111"/>
    </location>
</feature>
<feature type="region of interest" description="Disordered" evidence="1">
    <location>
        <begin position="137"/>
        <end position="160"/>
    </location>
</feature>
<feature type="modified residue" description="N-acetylalanine" evidence="4">
    <location>
        <position position="2"/>
    </location>
</feature>
<gene>
    <name type="primary">FAM50B</name>
    <name type="synonym">X5L</name>
</gene>
<dbReference type="EMBL" id="Y18504">
    <property type="protein sequence ID" value="CAB46273.1"/>
    <property type="molecule type" value="Genomic_DNA"/>
</dbReference>
<dbReference type="EMBL" id="Y18503">
    <property type="protein sequence ID" value="CAB46272.1"/>
    <property type="molecule type" value="mRNA"/>
</dbReference>
<dbReference type="EMBL" id="AL391422">
    <property type="status" value="NOT_ANNOTATED_CDS"/>
    <property type="molecule type" value="Genomic_DNA"/>
</dbReference>
<dbReference type="EMBL" id="CH471087">
    <property type="protein sequence ID" value="EAW55142.1"/>
    <property type="molecule type" value="Genomic_DNA"/>
</dbReference>
<dbReference type="EMBL" id="BC001261">
    <property type="protein sequence ID" value="AAH01261.1"/>
    <property type="molecule type" value="mRNA"/>
</dbReference>
<dbReference type="CCDS" id="CCDS4487.1"/>
<dbReference type="RefSeq" id="NP_036267.1">
    <property type="nucleotide sequence ID" value="NM_012135.3"/>
</dbReference>
<dbReference type="RefSeq" id="XP_016866218.1">
    <property type="nucleotide sequence ID" value="XM_017010729.2"/>
</dbReference>
<dbReference type="RefSeq" id="XP_054211117.1">
    <property type="nucleotide sequence ID" value="XM_054355142.1"/>
</dbReference>
<dbReference type="SMR" id="Q9Y247"/>
<dbReference type="BioGRID" id="117631">
    <property type="interactions" value="65"/>
</dbReference>
<dbReference type="FunCoup" id="Q9Y247">
    <property type="interactions" value="577"/>
</dbReference>
<dbReference type="IntAct" id="Q9Y247">
    <property type="interactions" value="59"/>
</dbReference>
<dbReference type="MINT" id="Q9Y247"/>
<dbReference type="STRING" id="9606.ENSP00000369627"/>
<dbReference type="iPTMnet" id="Q9Y247"/>
<dbReference type="PhosphoSitePlus" id="Q9Y247"/>
<dbReference type="BioMuta" id="FAM50B"/>
<dbReference type="DMDM" id="48474710"/>
<dbReference type="jPOST" id="Q9Y247"/>
<dbReference type="MassIVE" id="Q9Y247"/>
<dbReference type="PaxDb" id="9606-ENSP00000369627"/>
<dbReference type="PeptideAtlas" id="Q9Y247"/>
<dbReference type="ProteomicsDB" id="85644"/>
<dbReference type="Pumba" id="Q9Y247"/>
<dbReference type="Antibodypedia" id="24439">
    <property type="antibodies" value="62 antibodies from 14 providers"/>
</dbReference>
<dbReference type="DNASU" id="26240"/>
<dbReference type="Ensembl" id="ENST00000380274.2">
    <property type="protein sequence ID" value="ENSP00000369627.1"/>
    <property type="gene ID" value="ENSG00000145945.7"/>
</dbReference>
<dbReference type="Ensembl" id="ENST00000648326.1">
    <property type="protein sequence ID" value="ENSP00000496837.1"/>
    <property type="gene ID" value="ENSG00000145945.7"/>
</dbReference>
<dbReference type="GeneID" id="26240"/>
<dbReference type="KEGG" id="hsa:26240"/>
<dbReference type="MANE-Select" id="ENST00000648326.1">
    <property type="protein sequence ID" value="ENSP00000496837.1"/>
    <property type="RefSeq nucleotide sequence ID" value="NM_012135.3"/>
    <property type="RefSeq protein sequence ID" value="NP_036267.1"/>
</dbReference>
<dbReference type="UCSC" id="uc003mvu.4">
    <property type="organism name" value="human"/>
</dbReference>
<dbReference type="AGR" id="HGNC:18789"/>
<dbReference type="CTD" id="26240"/>
<dbReference type="DisGeNET" id="26240"/>
<dbReference type="GeneCards" id="FAM50B"/>
<dbReference type="HGNC" id="HGNC:18789">
    <property type="gene designation" value="FAM50B"/>
</dbReference>
<dbReference type="HPA" id="ENSG00000145945">
    <property type="expression patterns" value="Low tissue specificity"/>
</dbReference>
<dbReference type="MIM" id="614686">
    <property type="type" value="gene"/>
</dbReference>
<dbReference type="neXtProt" id="NX_Q9Y247"/>
<dbReference type="OpenTargets" id="ENSG00000145945"/>
<dbReference type="PharmGKB" id="PA134912073"/>
<dbReference type="VEuPathDB" id="HostDB:ENSG00000145945"/>
<dbReference type="eggNOG" id="KOG2894">
    <property type="taxonomic scope" value="Eukaryota"/>
</dbReference>
<dbReference type="GeneTree" id="ENSGT00390000004735"/>
<dbReference type="HOGENOM" id="CLU_037985_1_1_1"/>
<dbReference type="InParanoid" id="Q9Y247"/>
<dbReference type="OMA" id="HKGGTVQ"/>
<dbReference type="OrthoDB" id="1562195at2759"/>
<dbReference type="PAN-GO" id="Q9Y247">
    <property type="GO annotations" value="2 GO annotations based on evolutionary models"/>
</dbReference>
<dbReference type="PhylomeDB" id="Q9Y247"/>
<dbReference type="TreeFam" id="TF314738"/>
<dbReference type="PathwayCommons" id="Q9Y247"/>
<dbReference type="SignaLink" id="Q9Y247"/>
<dbReference type="BioGRID-ORCS" id="26240">
    <property type="hits" value="16 hits in 1143 CRISPR screens"/>
</dbReference>
<dbReference type="GenomeRNAi" id="26240"/>
<dbReference type="Pharos" id="Q9Y247">
    <property type="development level" value="Tbio"/>
</dbReference>
<dbReference type="PRO" id="PR:Q9Y247"/>
<dbReference type="Proteomes" id="UP000005640">
    <property type="component" value="Chromosome 6"/>
</dbReference>
<dbReference type="RNAct" id="Q9Y247">
    <property type="molecule type" value="protein"/>
</dbReference>
<dbReference type="Bgee" id="ENSG00000145945">
    <property type="expression patterns" value="Expressed in endothelial cell and 190 other cell types or tissues"/>
</dbReference>
<dbReference type="ExpressionAtlas" id="Q9Y247">
    <property type="expression patterns" value="baseline and differential"/>
</dbReference>
<dbReference type="GO" id="GO:0045171">
    <property type="term" value="C:intercellular bridge"/>
    <property type="evidence" value="ECO:0000314"/>
    <property type="project" value="HPA"/>
</dbReference>
<dbReference type="GO" id="GO:0030496">
    <property type="term" value="C:midbody"/>
    <property type="evidence" value="ECO:0000314"/>
    <property type="project" value="HPA"/>
</dbReference>
<dbReference type="GO" id="GO:0005654">
    <property type="term" value="C:nucleoplasm"/>
    <property type="evidence" value="ECO:0000314"/>
    <property type="project" value="HPA"/>
</dbReference>
<dbReference type="GO" id="GO:0005634">
    <property type="term" value="C:nucleus"/>
    <property type="evidence" value="ECO:0000318"/>
    <property type="project" value="GO_Central"/>
</dbReference>
<dbReference type="GO" id="GO:0006325">
    <property type="term" value="P:chromatin organization"/>
    <property type="evidence" value="ECO:0000318"/>
    <property type="project" value="GO_Central"/>
</dbReference>
<dbReference type="InterPro" id="IPR048337">
    <property type="entry name" value="FAM50A/XAP5_C"/>
</dbReference>
<dbReference type="InterPro" id="IPR007005">
    <property type="entry name" value="XAP5"/>
</dbReference>
<dbReference type="PANTHER" id="PTHR12722:SF1">
    <property type="entry name" value="PROTEIN FAM50B"/>
    <property type="match status" value="1"/>
</dbReference>
<dbReference type="PANTHER" id="PTHR12722">
    <property type="entry name" value="XAP-5 PROTEIN-RELATED"/>
    <property type="match status" value="1"/>
</dbReference>
<dbReference type="Pfam" id="PF04921">
    <property type="entry name" value="XAP5"/>
    <property type="match status" value="1"/>
</dbReference>
<reference key="1">
    <citation type="journal article" date="1999" name="Genomics">
        <title>Human and mouse XAP-5 and XAP-5-like (X5L) genes: identification of an ancient functional retroposon differentially expressed in testis.</title>
        <authorList>
            <person name="Sedlack Z."/>
            <person name="Muenstermann E."/>
            <person name="Dhorne-Pollet S."/>
            <person name="Otto C."/>
            <person name="Bock D."/>
            <person name="Schuetz G."/>
            <person name="Poustka A."/>
        </authorList>
    </citation>
    <scope>NUCLEOTIDE SEQUENCE [GENOMIC DNA]</scope>
</reference>
<reference key="2">
    <citation type="journal article" date="2003" name="Nature">
        <title>The DNA sequence and analysis of human chromosome 6.</title>
        <authorList>
            <person name="Mungall A.J."/>
            <person name="Palmer S.A."/>
            <person name="Sims S.K."/>
            <person name="Edwards C.A."/>
            <person name="Ashurst J.L."/>
            <person name="Wilming L."/>
            <person name="Jones M.C."/>
            <person name="Horton R."/>
            <person name="Hunt S.E."/>
            <person name="Scott C.E."/>
            <person name="Gilbert J.G.R."/>
            <person name="Clamp M.E."/>
            <person name="Bethel G."/>
            <person name="Milne S."/>
            <person name="Ainscough R."/>
            <person name="Almeida J.P."/>
            <person name="Ambrose K.D."/>
            <person name="Andrews T.D."/>
            <person name="Ashwell R.I.S."/>
            <person name="Babbage A.K."/>
            <person name="Bagguley C.L."/>
            <person name="Bailey J."/>
            <person name="Banerjee R."/>
            <person name="Barker D.J."/>
            <person name="Barlow K.F."/>
            <person name="Bates K."/>
            <person name="Beare D.M."/>
            <person name="Beasley H."/>
            <person name="Beasley O."/>
            <person name="Bird C.P."/>
            <person name="Blakey S.E."/>
            <person name="Bray-Allen S."/>
            <person name="Brook J."/>
            <person name="Brown A.J."/>
            <person name="Brown J.Y."/>
            <person name="Burford D.C."/>
            <person name="Burrill W."/>
            <person name="Burton J."/>
            <person name="Carder C."/>
            <person name="Carter N.P."/>
            <person name="Chapman J.C."/>
            <person name="Clark S.Y."/>
            <person name="Clark G."/>
            <person name="Clee C.M."/>
            <person name="Clegg S."/>
            <person name="Cobley V."/>
            <person name="Collier R.E."/>
            <person name="Collins J.E."/>
            <person name="Colman L.K."/>
            <person name="Corby N.R."/>
            <person name="Coville G.J."/>
            <person name="Culley K.M."/>
            <person name="Dhami P."/>
            <person name="Davies J."/>
            <person name="Dunn M."/>
            <person name="Earthrowl M.E."/>
            <person name="Ellington A.E."/>
            <person name="Evans K.A."/>
            <person name="Faulkner L."/>
            <person name="Francis M.D."/>
            <person name="Frankish A."/>
            <person name="Frankland J."/>
            <person name="French L."/>
            <person name="Garner P."/>
            <person name="Garnett J."/>
            <person name="Ghori M.J."/>
            <person name="Gilby L.M."/>
            <person name="Gillson C.J."/>
            <person name="Glithero R.J."/>
            <person name="Grafham D.V."/>
            <person name="Grant M."/>
            <person name="Gribble S."/>
            <person name="Griffiths C."/>
            <person name="Griffiths M.N.D."/>
            <person name="Hall R."/>
            <person name="Halls K.S."/>
            <person name="Hammond S."/>
            <person name="Harley J.L."/>
            <person name="Hart E.A."/>
            <person name="Heath P.D."/>
            <person name="Heathcott R."/>
            <person name="Holmes S.J."/>
            <person name="Howden P.J."/>
            <person name="Howe K.L."/>
            <person name="Howell G.R."/>
            <person name="Huckle E."/>
            <person name="Humphray S.J."/>
            <person name="Humphries M.D."/>
            <person name="Hunt A.R."/>
            <person name="Johnson C.M."/>
            <person name="Joy A.A."/>
            <person name="Kay M."/>
            <person name="Keenan S.J."/>
            <person name="Kimberley A.M."/>
            <person name="King A."/>
            <person name="Laird G.K."/>
            <person name="Langford C."/>
            <person name="Lawlor S."/>
            <person name="Leongamornlert D.A."/>
            <person name="Leversha M."/>
            <person name="Lloyd C.R."/>
            <person name="Lloyd D.M."/>
            <person name="Loveland J.E."/>
            <person name="Lovell J."/>
            <person name="Martin S."/>
            <person name="Mashreghi-Mohammadi M."/>
            <person name="Maslen G.L."/>
            <person name="Matthews L."/>
            <person name="McCann O.T."/>
            <person name="McLaren S.J."/>
            <person name="McLay K."/>
            <person name="McMurray A."/>
            <person name="Moore M.J.F."/>
            <person name="Mullikin J.C."/>
            <person name="Niblett D."/>
            <person name="Nickerson T."/>
            <person name="Novik K.L."/>
            <person name="Oliver K."/>
            <person name="Overton-Larty E.K."/>
            <person name="Parker A."/>
            <person name="Patel R."/>
            <person name="Pearce A.V."/>
            <person name="Peck A.I."/>
            <person name="Phillimore B.J.C.T."/>
            <person name="Phillips S."/>
            <person name="Plumb R.W."/>
            <person name="Porter K.M."/>
            <person name="Ramsey Y."/>
            <person name="Ranby S.A."/>
            <person name="Rice C.M."/>
            <person name="Ross M.T."/>
            <person name="Searle S.M."/>
            <person name="Sehra H.K."/>
            <person name="Sheridan E."/>
            <person name="Skuce C.D."/>
            <person name="Smith S."/>
            <person name="Smith M."/>
            <person name="Spraggon L."/>
            <person name="Squares S.L."/>
            <person name="Steward C.A."/>
            <person name="Sycamore N."/>
            <person name="Tamlyn-Hall G."/>
            <person name="Tester J."/>
            <person name="Theaker A.J."/>
            <person name="Thomas D.W."/>
            <person name="Thorpe A."/>
            <person name="Tracey A."/>
            <person name="Tromans A."/>
            <person name="Tubby B."/>
            <person name="Wall M."/>
            <person name="Wallis J.M."/>
            <person name="West A.P."/>
            <person name="White S.S."/>
            <person name="Whitehead S.L."/>
            <person name="Whittaker H."/>
            <person name="Wild A."/>
            <person name="Willey D.J."/>
            <person name="Wilmer T.E."/>
            <person name="Wood J.M."/>
            <person name="Wray P.W."/>
            <person name="Wyatt J.C."/>
            <person name="Young L."/>
            <person name="Younger R.M."/>
            <person name="Bentley D.R."/>
            <person name="Coulson A."/>
            <person name="Durbin R.M."/>
            <person name="Hubbard T."/>
            <person name="Sulston J.E."/>
            <person name="Dunham I."/>
            <person name="Rogers J."/>
            <person name="Beck S."/>
        </authorList>
    </citation>
    <scope>NUCLEOTIDE SEQUENCE [LARGE SCALE GENOMIC DNA]</scope>
</reference>
<reference key="3">
    <citation type="submission" date="2005-07" db="EMBL/GenBank/DDBJ databases">
        <authorList>
            <person name="Mural R.J."/>
            <person name="Istrail S."/>
            <person name="Sutton G.G."/>
            <person name="Florea L."/>
            <person name="Halpern A.L."/>
            <person name="Mobarry C.M."/>
            <person name="Lippert R."/>
            <person name="Walenz B."/>
            <person name="Shatkay H."/>
            <person name="Dew I."/>
            <person name="Miller J.R."/>
            <person name="Flanigan M.J."/>
            <person name="Edwards N.J."/>
            <person name="Bolanos R."/>
            <person name="Fasulo D."/>
            <person name="Halldorsson B.V."/>
            <person name="Hannenhalli S."/>
            <person name="Turner R."/>
            <person name="Yooseph S."/>
            <person name="Lu F."/>
            <person name="Nusskern D.R."/>
            <person name="Shue B.C."/>
            <person name="Zheng X.H."/>
            <person name="Zhong F."/>
            <person name="Delcher A.L."/>
            <person name="Huson D.H."/>
            <person name="Kravitz S.A."/>
            <person name="Mouchard L."/>
            <person name="Reinert K."/>
            <person name="Remington K.A."/>
            <person name="Clark A.G."/>
            <person name="Waterman M.S."/>
            <person name="Eichler E.E."/>
            <person name="Adams M.D."/>
            <person name="Hunkapiller M.W."/>
            <person name="Myers E.W."/>
            <person name="Venter J.C."/>
        </authorList>
    </citation>
    <scope>NUCLEOTIDE SEQUENCE [LARGE SCALE GENOMIC DNA]</scope>
</reference>
<reference key="4">
    <citation type="journal article" date="2004" name="Genome Res.">
        <title>The status, quality, and expansion of the NIH full-length cDNA project: the Mammalian Gene Collection (MGC).</title>
        <authorList>
            <consortium name="The MGC Project Team"/>
        </authorList>
    </citation>
    <scope>NUCLEOTIDE SEQUENCE [LARGE SCALE MRNA]</scope>
    <source>
        <tissue>Cervix</tissue>
    </source>
</reference>
<reference key="5">
    <citation type="journal article" date="2011" name="Hum. Mol. Genet.">
        <title>Methylation screening of reciprocal genome-wide UPDs identifies novel human-specific imprinted genes.</title>
        <authorList>
            <person name="Nakabayashi K."/>
            <person name="Trujillo A.M."/>
            <person name="Tayama C."/>
            <person name="Camprubi C."/>
            <person name="Yoshida W."/>
            <person name="Lapunzina P."/>
            <person name="Sanchez A."/>
            <person name="Soejima H."/>
            <person name="Aburatani H."/>
            <person name="Nagae G."/>
            <person name="Ogata T."/>
            <person name="Hata K."/>
            <person name="Monk D."/>
        </authorList>
    </citation>
    <scope>IMPRINTING</scope>
    <scope>INDUCTION</scope>
</reference>
<reference key="6">
    <citation type="journal article" date="2012" name="Proc. Natl. Acad. Sci. U.S.A.">
        <title>N-terminal acetylome analyses and functional insights of the N-terminal acetyltransferase NatB.</title>
        <authorList>
            <person name="Van Damme P."/>
            <person name="Lasa M."/>
            <person name="Polevoda B."/>
            <person name="Gazquez C."/>
            <person name="Elosegui-Artola A."/>
            <person name="Kim D.S."/>
            <person name="De Juan-Pardo E."/>
            <person name="Demeyer K."/>
            <person name="Hole K."/>
            <person name="Larrea E."/>
            <person name="Timmerman E."/>
            <person name="Prieto J."/>
            <person name="Arnesen T."/>
            <person name="Sherman F."/>
            <person name="Gevaert K."/>
            <person name="Aldabe R."/>
        </authorList>
    </citation>
    <scope>ACETYLATION [LARGE SCALE ANALYSIS] AT ALA-2</scope>
    <scope>CLEAVAGE OF INITIATOR METHIONINE [LARGE SCALE ANALYSIS]</scope>
    <scope>IDENTIFICATION BY MASS SPECTROMETRY [LARGE SCALE ANALYSIS]</scope>
</reference>
<evidence type="ECO:0000256" key="1">
    <source>
        <dbReference type="SAM" id="MobiDB-lite"/>
    </source>
</evidence>
<evidence type="ECO:0000269" key="2">
    <source>
    </source>
</evidence>
<evidence type="ECO:0000305" key="3"/>
<evidence type="ECO:0007744" key="4">
    <source>
    </source>
</evidence>
<keyword id="KW-0007">Acetylation</keyword>
<keyword id="KW-1267">Proteomics identification</keyword>
<keyword id="KW-1185">Reference proteome</keyword>
<sequence length="325" mass="38709">MAQYKGTMREAGRAMHLLKKRERQREQMEVLKQRIAEETILKSQVDKRFSAHYDAVEAELKSSTVGLVTLNDMKARQEALVRERERQLAKRQHLEEQRLQQERQREQEQRRERKRKISCLSFALDDLDDQADAAEARRAGNLGKNPDVDTSFLPDRDREEEENRLREELRQEWEAQREKVKDEEMEVTFSYWDGSGHRRTVRVRKGNTVQQFLKKALQGLRKDFLELRSAGVEQLMFIKEDLILPHYHTFYDFIIARARGKSGPLFSFDVHDDVRLLSDATMEKDESHAGKVVLRSWYEKNKHIFPASRWEAYDPEKKWDKYTIR</sequence>
<protein>
    <recommendedName>
        <fullName>Protein FAM50B</fullName>
    </recommendedName>
    <alternativeName>
        <fullName>Protein XAP-5-like</fullName>
    </alternativeName>
</protein>